<feature type="chain" id="PRO_0000330602" description="Putative esterase">
    <location>
        <begin position="1"/>
        <end position="655"/>
    </location>
</feature>
<feature type="transmembrane region" description="Helical" evidence="2">
    <location>
        <begin position="9"/>
        <end position="29"/>
    </location>
</feature>
<feature type="active site" description="Charge relay system" evidence="1">
    <location>
        <position position="515"/>
    </location>
</feature>
<feature type="glycosylation site" description="N-linked (GlcNAc...) asparagine; by host" evidence="2">
    <location>
        <position position="71"/>
    </location>
</feature>
<feature type="glycosylation site" description="N-linked (GlcNAc...) asparagine; by host" evidence="2">
    <location>
        <position position="89"/>
    </location>
</feature>
<feature type="glycosylation site" description="N-linked (GlcNAc...) asparagine; by host" evidence="2">
    <location>
        <position position="101"/>
    </location>
</feature>
<feature type="glycosylation site" description="N-linked (GlcNAc...) asparagine; by host" evidence="2">
    <location>
        <position position="185"/>
    </location>
</feature>
<feature type="glycosylation site" description="N-linked (GlcNAc...) asparagine; by host" evidence="2">
    <location>
        <position position="386"/>
    </location>
</feature>
<feature type="glycosylation site" description="N-linked (GlcNAc...) asparagine; by host" evidence="2">
    <location>
        <position position="449"/>
    </location>
</feature>
<feature type="glycosylation site" description="N-linked (GlcNAc...) asparagine; by host" evidence="2">
    <location>
        <position position="512"/>
    </location>
</feature>
<feature type="glycosylation site" description="N-linked (GlcNAc...) asparagine; by host" evidence="2">
    <location>
        <position position="527"/>
    </location>
</feature>
<feature type="glycosylation site" description="N-linked (GlcNAc...) asparagine; by host" evidence="2">
    <location>
        <position position="597"/>
    </location>
</feature>
<reference key="1">
    <citation type="journal article" date="2007" name="J. Gen. Virol.">
        <title>Sequence and organization of the Heliothis virescens ascovirus genome.</title>
        <authorList>
            <person name="Asgari S."/>
            <person name="Davis J."/>
            <person name="Wood D."/>
            <person name="Wilson P."/>
            <person name="McGrath A."/>
        </authorList>
    </citation>
    <scope>NUCLEOTIDE SEQUENCE [LARGE SCALE GENOMIC DNA]</scope>
</reference>
<dbReference type="EC" id="3.1.1.1"/>
<dbReference type="EMBL" id="EF133465">
    <property type="protein sequence ID" value="ABO37205.1"/>
    <property type="molecule type" value="Genomic_DNA"/>
</dbReference>
<dbReference type="RefSeq" id="YP_001110871.1">
    <property type="nucleotide sequence ID" value="NC_009233.1"/>
</dbReference>
<dbReference type="SMR" id="A4KX74"/>
<dbReference type="KEGG" id="vg:5076189"/>
<dbReference type="OrthoDB" id="29735at10239"/>
<dbReference type="Proteomes" id="UP000001324">
    <property type="component" value="Genome"/>
</dbReference>
<dbReference type="GO" id="GO:0016020">
    <property type="term" value="C:membrane"/>
    <property type="evidence" value="ECO:0007669"/>
    <property type="project" value="UniProtKB-SubCell"/>
</dbReference>
<dbReference type="GO" id="GO:0106435">
    <property type="term" value="F:carboxylesterase activity"/>
    <property type="evidence" value="ECO:0007669"/>
    <property type="project" value="UniProtKB-EC"/>
</dbReference>
<dbReference type="Gene3D" id="3.40.50.1820">
    <property type="entry name" value="alpha/beta hydrolase"/>
    <property type="match status" value="1"/>
</dbReference>
<dbReference type="InterPro" id="IPR029058">
    <property type="entry name" value="AB_hydrolase_fold"/>
</dbReference>
<dbReference type="InterPro" id="IPR002018">
    <property type="entry name" value="CarbesteraseB"/>
</dbReference>
<dbReference type="InterPro" id="IPR050309">
    <property type="entry name" value="Type-B_Carboxylest/Lipase"/>
</dbReference>
<dbReference type="PANTHER" id="PTHR11559">
    <property type="entry name" value="CARBOXYLESTERASE"/>
    <property type="match status" value="1"/>
</dbReference>
<dbReference type="Pfam" id="PF00135">
    <property type="entry name" value="COesterase"/>
    <property type="match status" value="1"/>
</dbReference>
<dbReference type="SUPFAM" id="SSF53474">
    <property type="entry name" value="alpha/beta-Hydrolases"/>
    <property type="match status" value="1"/>
</dbReference>
<gene>
    <name type="ORF">ORF19</name>
</gene>
<evidence type="ECO:0000250" key="1"/>
<evidence type="ECO:0000255" key="2"/>
<evidence type="ECO:0000305" key="3"/>
<sequence>MCKSRLPTVLSLTLIYISISIGFSVYFYVLMEAAYDQFSSMFESYTQTAVHLQSNSRTLKSDLSDYMQLLNYSRKFDESGEESVLRRHNITTPRVFYIDLNYTTALGAENRNLNMINFYAIPYRYVDLLDPFGNSIPVTGRTPATEYIDCSRDKKEKCIDSIPPFDGVLDCLSLDIHMQPWSRNNKSFNRPIIIWLGEVAGELWRLVAGGLIVIRANYRRGCYGFLCHHDQSLPYRNQGVNDVLHAIDWTIENARHFAGDISKITLAGHGASASLVEYIRLNHGHHLPLDKYIVMSANNFGSRDLYCSSNSNVMVTTARLLGMPPSPATESGKERSVYESVRYLSFVEPKLVMSKLYGLKAAFHPCPLSVNNRRASTFGIGFKTKNHTSSNCIRTANEQPVLFTNTLNEYHNFVYGSTVFTHARSETILRTIGDMLSRHFIESRLAYANSSTEKLIQQVNGQYNVVDGEFVDYDAFIRLLTDFAFIMPTVKMNEFTTECGGNSYHYVFDFGNSTHGDDLKMLTSSANDTSLTHFQRQLADGLGFILSKFVRRGYPVKKQDGWCPSTGLVAQIMEMNTKDENVVVKKSTEGVLIPLLNQSYVLHFHRVSVAKQKCYNRLGNVPFWNDLLKFHQSARRGWRDGDTGCARSKYLSEIV</sequence>
<organismHost>
    <name type="scientific">Noctuidae</name>
    <name type="common">owlet moths</name>
    <dbReference type="NCBI Taxonomy" id="7100"/>
</organismHost>
<name>ESTE_HVAVE</name>
<proteinExistence type="inferred from homology"/>
<protein>
    <recommendedName>
        <fullName>Putative esterase</fullName>
        <ecNumber>3.1.1.1</ecNumber>
    </recommendedName>
</protein>
<organism>
    <name type="scientific">Heliothis virescens ascovirus 3e</name>
    <name type="common">HvAV-3e</name>
    <dbReference type="NCBI Taxonomy" id="260797"/>
    <lineage>
        <taxon>Viruses</taxon>
        <taxon>Varidnaviria</taxon>
        <taxon>Bamfordvirae</taxon>
        <taxon>Nucleocytoviricota</taxon>
        <taxon>Megaviricetes</taxon>
        <taxon>Pimascovirales</taxon>
        <taxon>Ascoviridae</taxon>
        <taxon>Ascovirus</taxon>
        <taxon>Ascovirus TnAV2a</taxon>
    </lineage>
</organism>
<comment type="catalytic activity">
    <reaction>
        <text>a carboxylic ester + H2O = an alcohol + a carboxylate + H(+)</text>
        <dbReference type="Rhea" id="RHEA:21164"/>
        <dbReference type="ChEBI" id="CHEBI:15377"/>
        <dbReference type="ChEBI" id="CHEBI:15378"/>
        <dbReference type="ChEBI" id="CHEBI:29067"/>
        <dbReference type="ChEBI" id="CHEBI:30879"/>
        <dbReference type="ChEBI" id="CHEBI:33308"/>
        <dbReference type="EC" id="3.1.1.1"/>
    </reaction>
</comment>
<comment type="subcellular location">
    <subcellularLocation>
        <location evidence="3">Membrane</location>
        <topology evidence="3">Single-pass membrane protein</topology>
    </subcellularLocation>
</comment>
<comment type="similarity">
    <text evidence="3">Belongs to the type-B carboxylesterase/lipase family.</text>
</comment>
<accession>A4KX74</accession>
<keyword id="KW-0325">Glycoprotein</keyword>
<keyword id="KW-0378">Hydrolase</keyword>
<keyword id="KW-0472">Membrane</keyword>
<keyword id="KW-1185">Reference proteome</keyword>
<keyword id="KW-0812">Transmembrane</keyword>
<keyword id="KW-1133">Transmembrane helix</keyword>